<reference key="1">
    <citation type="journal article" date="2008" name="Genome Res.">
        <title>Comparative genome analysis of Salmonella enteritidis PT4 and Salmonella gallinarum 287/91 provides insights into evolutionary and host adaptation pathways.</title>
        <authorList>
            <person name="Thomson N.R."/>
            <person name="Clayton D.J."/>
            <person name="Windhorst D."/>
            <person name="Vernikos G."/>
            <person name="Davidson S."/>
            <person name="Churcher C."/>
            <person name="Quail M.A."/>
            <person name="Stevens M."/>
            <person name="Jones M.A."/>
            <person name="Watson M."/>
            <person name="Barron A."/>
            <person name="Layton A."/>
            <person name="Pickard D."/>
            <person name="Kingsley R.A."/>
            <person name="Bignell A."/>
            <person name="Clark L."/>
            <person name="Harris B."/>
            <person name="Ormond D."/>
            <person name="Abdellah Z."/>
            <person name="Brooks K."/>
            <person name="Cherevach I."/>
            <person name="Chillingworth T."/>
            <person name="Woodward J."/>
            <person name="Norberczak H."/>
            <person name="Lord A."/>
            <person name="Arrowsmith C."/>
            <person name="Jagels K."/>
            <person name="Moule S."/>
            <person name="Mungall K."/>
            <person name="Saunders M."/>
            <person name="Whitehead S."/>
            <person name="Chabalgoity J.A."/>
            <person name="Maskell D."/>
            <person name="Humphreys T."/>
            <person name="Roberts M."/>
            <person name="Barrow P.A."/>
            <person name="Dougan G."/>
            <person name="Parkhill J."/>
        </authorList>
    </citation>
    <scope>NUCLEOTIDE SEQUENCE [LARGE SCALE GENOMIC DNA]</scope>
    <source>
        <strain>P125109</strain>
    </source>
</reference>
<comment type="function">
    <text evidence="1">Catalyzes the condensation of carbamoyl phosphate and aspartate to form carbamoyl aspartate and inorganic phosphate, the committed step in the de novo pyrimidine nucleotide biosynthesis pathway.</text>
</comment>
<comment type="catalytic activity">
    <reaction evidence="1">
        <text>carbamoyl phosphate + L-aspartate = N-carbamoyl-L-aspartate + phosphate + H(+)</text>
        <dbReference type="Rhea" id="RHEA:20013"/>
        <dbReference type="ChEBI" id="CHEBI:15378"/>
        <dbReference type="ChEBI" id="CHEBI:29991"/>
        <dbReference type="ChEBI" id="CHEBI:32814"/>
        <dbReference type="ChEBI" id="CHEBI:43474"/>
        <dbReference type="ChEBI" id="CHEBI:58228"/>
        <dbReference type="EC" id="2.1.3.2"/>
    </reaction>
</comment>
<comment type="pathway">
    <text evidence="1">Pyrimidine metabolism; UMP biosynthesis via de novo pathway; (S)-dihydroorotate from bicarbonate: step 2/3.</text>
</comment>
<comment type="subunit">
    <text evidence="1">Heterododecamer (2C3:3R2) of six catalytic PyrB chains organized as two trimers (C3), and six regulatory PyrI chains organized as three dimers (R2).</text>
</comment>
<comment type="similarity">
    <text evidence="1">Belongs to the aspartate/ornithine carbamoyltransferase superfamily. ATCase family.</text>
</comment>
<protein>
    <recommendedName>
        <fullName evidence="1">Aspartate carbamoyltransferase catalytic subunit</fullName>
        <ecNumber evidence="1">2.1.3.2</ecNumber>
    </recommendedName>
    <alternativeName>
        <fullName evidence="1">Aspartate transcarbamylase</fullName>
        <shortName evidence="1">ATCase</shortName>
    </alternativeName>
</protein>
<sequence>MANPLYQKHIISINDLSRDDLNLVLATAAKLKANPQPELLKHKVIASCFFEASTRTRLSFETSMHRLGASVVGFSDSANTSLGKKGETLADTISVISTYVDAIVMRHPQEGAARLATEFSGQVPVLNAGDGSNQHPTQTLLDLFTIQETQGRLDNLHIAMVGDLKYGRTVHSLTQALAKFSGNRFYFIAPDALAMPQYILDMLDEKGMAWSLHGSIEEVMADVDILYMTRVQKERLDPSEYANVKAQFVLRASDLNGARENMKVLHPLPRIDEITTDVDKTPHAWYFQQAGNGIFARQALLALVLNSELSL</sequence>
<accession>B5R1I6</accession>
<gene>
    <name evidence="1" type="primary">pyrB</name>
    <name type="ordered locus">SEN4211</name>
</gene>
<name>PYRB_SALEP</name>
<feature type="chain" id="PRO_1000088796" description="Aspartate carbamoyltransferase catalytic subunit">
    <location>
        <begin position="1"/>
        <end position="311"/>
    </location>
</feature>
<feature type="binding site" evidence="1">
    <location>
        <position position="55"/>
    </location>
    <ligand>
        <name>carbamoyl phosphate</name>
        <dbReference type="ChEBI" id="CHEBI:58228"/>
    </ligand>
</feature>
<feature type="binding site" evidence="1">
    <location>
        <position position="56"/>
    </location>
    <ligand>
        <name>carbamoyl phosphate</name>
        <dbReference type="ChEBI" id="CHEBI:58228"/>
    </ligand>
</feature>
<feature type="binding site" evidence="1">
    <location>
        <position position="85"/>
    </location>
    <ligand>
        <name>L-aspartate</name>
        <dbReference type="ChEBI" id="CHEBI:29991"/>
    </ligand>
</feature>
<feature type="binding site" evidence="1">
    <location>
        <position position="106"/>
    </location>
    <ligand>
        <name>carbamoyl phosphate</name>
        <dbReference type="ChEBI" id="CHEBI:58228"/>
    </ligand>
</feature>
<feature type="binding site" evidence="1">
    <location>
        <position position="135"/>
    </location>
    <ligand>
        <name>carbamoyl phosphate</name>
        <dbReference type="ChEBI" id="CHEBI:58228"/>
    </ligand>
</feature>
<feature type="binding site" evidence="1">
    <location>
        <position position="138"/>
    </location>
    <ligand>
        <name>carbamoyl phosphate</name>
        <dbReference type="ChEBI" id="CHEBI:58228"/>
    </ligand>
</feature>
<feature type="binding site" evidence="1">
    <location>
        <position position="168"/>
    </location>
    <ligand>
        <name>L-aspartate</name>
        <dbReference type="ChEBI" id="CHEBI:29991"/>
    </ligand>
</feature>
<feature type="binding site" evidence="1">
    <location>
        <position position="230"/>
    </location>
    <ligand>
        <name>L-aspartate</name>
        <dbReference type="ChEBI" id="CHEBI:29991"/>
    </ligand>
</feature>
<feature type="binding site" evidence="1">
    <location>
        <position position="268"/>
    </location>
    <ligand>
        <name>carbamoyl phosphate</name>
        <dbReference type="ChEBI" id="CHEBI:58228"/>
    </ligand>
</feature>
<feature type="binding site" evidence="1">
    <location>
        <position position="269"/>
    </location>
    <ligand>
        <name>carbamoyl phosphate</name>
        <dbReference type="ChEBI" id="CHEBI:58228"/>
    </ligand>
</feature>
<dbReference type="EC" id="2.1.3.2" evidence="1"/>
<dbReference type="EMBL" id="AM933172">
    <property type="protein sequence ID" value="CAR35769.1"/>
    <property type="molecule type" value="Genomic_DNA"/>
</dbReference>
<dbReference type="RefSeq" id="WP_000013055.1">
    <property type="nucleotide sequence ID" value="NC_011294.1"/>
</dbReference>
<dbReference type="SMR" id="B5R1I6"/>
<dbReference type="KEGG" id="set:SEN4211"/>
<dbReference type="HOGENOM" id="CLU_043846_1_2_6"/>
<dbReference type="UniPathway" id="UPA00070">
    <property type="reaction ID" value="UER00116"/>
</dbReference>
<dbReference type="Proteomes" id="UP000000613">
    <property type="component" value="Chromosome"/>
</dbReference>
<dbReference type="GO" id="GO:0005829">
    <property type="term" value="C:cytosol"/>
    <property type="evidence" value="ECO:0007669"/>
    <property type="project" value="TreeGrafter"/>
</dbReference>
<dbReference type="GO" id="GO:0016597">
    <property type="term" value="F:amino acid binding"/>
    <property type="evidence" value="ECO:0007669"/>
    <property type="project" value="InterPro"/>
</dbReference>
<dbReference type="GO" id="GO:0004070">
    <property type="term" value="F:aspartate carbamoyltransferase activity"/>
    <property type="evidence" value="ECO:0007669"/>
    <property type="project" value="UniProtKB-UniRule"/>
</dbReference>
<dbReference type="GO" id="GO:0006207">
    <property type="term" value="P:'de novo' pyrimidine nucleobase biosynthetic process"/>
    <property type="evidence" value="ECO:0007669"/>
    <property type="project" value="InterPro"/>
</dbReference>
<dbReference type="GO" id="GO:0044205">
    <property type="term" value="P:'de novo' UMP biosynthetic process"/>
    <property type="evidence" value="ECO:0007669"/>
    <property type="project" value="UniProtKB-UniRule"/>
</dbReference>
<dbReference type="GO" id="GO:0006520">
    <property type="term" value="P:amino acid metabolic process"/>
    <property type="evidence" value="ECO:0007669"/>
    <property type="project" value="InterPro"/>
</dbReference>
<dbReference type="FunFam" id="3.40.50.1370:FF:000001">
    <property type="entry name" value="Aspartate carbamoyltransferase"/>
    <property type="match status" value="1"/>
</dbReference>
<dbReference type="FunFam" id="3.40.50.1370:FF:000002">
    <property type="entry name" value="Aspartate carbamoyltransferase 2"/>
    <property type="match status" value="1"/>
</dbReference>
<dbReference type="Gene3D" id="3.40.50.1370">
    <property type="entry name" value="Aspartate/ornithine carbamoyltransferase"/>
    <property type="match status" value="2"/>
</dbReference>
<dbReference type="HAMAP" id="MF_00001">
    <property type="entry name" value="Asp_carb_tr"/>
    <property type="match status" value="1"/>
</dbReference>
<dbReference type="InterPro" id="IPR006132">
    <property type="entry name" value="Asp/Orn_carbamoyltranf_P-bd"/>
</dbReference>
<dbReference type="InterPro" id="IPR006130">
    <property type="entry name" value="Asp/Orn_carbamoylTrfase"/>
</dbReference>
<dbReference type="InterPro" id="IPR036901">
    <property type="entry name" value="Asp/Orn_carbamoylTrfase_sf"/>
</dbReference>
<dbReference type="InterPro" id="IPR002082">
    <property type="entry name" value="Asp_carbamoyltransf"/>
</dbReference>
<dbReference type="InterPro" id="IPR006131">
    <property type="entry name" value="Asp_carbamoyltransf_Asp/Orn-bd"/>
</dbReference>
<dbReference type="NCBIfam" id="TIGR00670">
    <property type="entry name" value="asp_carb_tr"/>
    <property type="match status" value="1"/>
</dbReference>
<dbReference type="NCBIfam" id="NF002032">
    <property type="entry name" value="PRK00856.1"/>
    <property type="match status" value="1"/>
</dbReference>
<dbReference type="PANTHER" id="PTHR45753:SF6">
    <property type="entry name" value="ASPARTATE CARBAMOYLTRANSFERASE"/>
    <property type="match status" value="1"/>
</dbReference>
<dbReference type="PANTHER" id="PTHR45753">
    <property type="entry name" value="ORNITHINE CARBAMOYLTRANSFERASE, MITOCHONDRIAL"/>
    <property type="match status" value="1"/>
</dbReference>
<dbReference type="Pfam" id="PF00185">
    <property type="entry name" value="OTCace"/>
    <property type="match status" value="1"/>
</dbReference>
<dbReference type="Pfam" id="PF02729">
    <property type="entry name" value="OTCace_N"/>
    <property type="match status" value="1"/>
</dbReference>
<dbReference type="PRINTS" id="PR00100">
    <property type="entry name" value="AOTCASE"/>
</dbReference>
<dbReference type="PRINTS" id="PR00101">
    <property type="entry name" value="ATCASE"/>
</dbReference>
<dbReference type="SUPFAM" id="SSF53671">
    <property type="entry name" value="Aspartate/ornithine carbamoyltransferase"/>
    <property type="match status" value="1"/>
</dbReference>
<dbReference type="PROSITE" id="PS00097">
    <property type="entry name" value="CARBAMOYLTRANSFERASE"/>
    <property type="match status" value="1"/>
</dbReference>
<evidence type="ECO:0000255" key="1">
    <source>
        <dbReference type="HAMAP-Rule" id="MF_00001"/>
    </source>
</evidence>
<keyword id="KW-0665">Pyrimidine biosynthesis</keyword>
<keyword id="KW-0808">Transferase</keyword>
<organism>
    <name type="scientific">Salmonella enteritidis PT4 (strain P125109)</name>
    <dbReference type="NCBI Taxonomy" id="550537"/>
    <lineage>
        <taxon>Bacteria</taxon>
        <taxon>Pseudomonadati</taxon>
        <taxon>Pseudomonadota</taxon>
        <taxon>Gammaproteobacteria</taxon>
        <taxon>Enterobacterales</taxon>
        <taxon>Enterobacteriaceae</taxon>
        <taxon>Salmonella</taxon>
    </lineage>
</organism>
<proteinExistence type="inferred from homology"/>